<gene>
    <name type="primary">sodA</name>
</gene>
<name>SODM_STRIN</name>
<reference key="1">
    <citation type="journal article" date="1998" name="J. Clin. Microbiol.">
        <title>Identification of streptococci to species level by sequencing the gene encoding the manganese-dependent superoxide dismutase.</title>
        <authorList>
            <person name="Poyart C."/>
            <person name="Quesne G."/>
            <person name="Coulon S."/>
            <person name="Berche P."/>
            <person name="Trieu-Cuot P."/>
        </authorList>
    </citation>
    <scope>NUCLEOTIDE SEQUENCE [GENOMIC DNA]</scope>
    <source>
        <strain>ATCC 29178 / DSM 20576 / CIP 102508 / KCTC 3657 / LMG 14520 / NCIMB 702722 / PW</strain>
    </source>
</reference>
<protein>
    <recommendedName>
        <fullName>Superoxide dismutase [Mn/Fe]</fullName>
        <ecNumber evidence="1">1.15.1.1</ecNumber>
    </recommendedName>
</protein>
<accession>O54233</accession>
<dbReference type="EC" id="1.15.1.1" evidence="1"/>
<dbReference type="EMBL" id="Z99176">
    <property type="protein sequence ID" value="CAB16320.1"/>
    <property type="molecule type" value="Genomic_DNA"/>
</dbReference>
<dbReference type="SMR" id="O54233"/>
<dbReference type="STRING" id="1346.BMF34_03115"/>
<dbReference type="eggNOG" id="COG0605">
    <property type="taxonomic scope" value="Bacteria"/>
</dbReference>
<dbReference type="GO" id="GO:0005737">
    <property type="term" value="C:cytoplasm"/>
    <property type="evidence" value="ECO:0007669"/>
    <property type="project" value="TreeGrafter"/>
</dbReference>
<dbReference type="GO" id="GO:0046872">
    <property type="term" value="F:metal ion binding"/>
    <property type="evidence" value="ECO:0007669"/>
    <property type="project" value="UniProtKB-KW"/>
</dbReference>
<dbReference type="GO" id="GO:0004784">
    <property type="term" value="F:superoxide dismutase activity"/>
    <property type="evidence" value="ECO:0007669"/>
    <property type="project" value="UniProtKB-EC"/>
</dbReference>
<dbReference type="FunFam" id="1.10.287.990:FF:000001">
    <property type="entry name" value="Superoxide dismutase"/>
    <property type="match status" value="1"/>
</dbReference>
<dbReference type="Gene3D" id="1.10.287.990">
    <property type="entry name" value="Fe,Mn superoxide dismutase (SOD) domain"/>
    <property type="match status" value="1"/>
</dbReference>
<dbReference type="Gene3D" id="3.55.40.20">
    <property type="entry name" value="Iron/manganese superoxide dismutase, C-terminal domain"/>
    <property type="match status" value="1"/>
</dbReference>
<dbReference type="InterPro" id="IPR001189">
    <property type="entry name" value="Mn/Fe_SOD"/>
</dbReference>
<dbReference type="InterPro" id="IPR019832">
    <property type="entry name" value="Mn/Fe_SOD_C"/>
</dbReference>
<dbReference type="InterPro" id="IPR019831">
    <property type="entry name" value="Mn/Fe_SOD_N"/>
</dbReference>
<dbReference type="InterPro" id="IPR036324">
    <property type="entry name" value="Mn/Fe_SOD_N_sf"/>
</dbReference>
<dbReference type="InterPro" id="IPR036314">
    <property type="entry name" value="SOD_C_sf"/>
</dbReference>
<dbReference type="PANTHER" id="PTHR43595">
    <property type="entry name" value="37S RIBOSOMAL PROTEIN S26, MITOCHONDRIAL"/>
    <property type="match status" value="1"/>
</dbReference>
<dbReference type="PANTHER" id="PTHR43595:SF2">
    <property type="entry name" value="SMALL RIBOSOMAL SUBUNIT PROTEIN MS42"/>
    <property type="match status" value="1"/>
</dbReference>
<dbReference type="Pfam" id="PF02777">
    <property type="entry name" value="Sod_Fe_C"/>
    <property type="match status" value="1"/>
</dbReference>
<dbReference type="Pfam" id="PF00081">
    <property type="entry name" value="Sod_Fe_N"/>
    <property type="match status" value="1"/>
</dbReference>
<dbReference type="PRINTS" id="PR01703">
    <property type="entry name" value="MNSODISMTASE"/>
</dbReference>
<dbReference type="SUPFAM" id="SSF54719">
    <property type="entry name" value="Fe,Mn superoxide dismutase (SOD), C-terminal domain"/>
    <property type="match status" value="1"/>
</dbReference>
<dbReference type="SUPFAM" id="SSF46609">
    <property type="entry name" value="Fe,Mn superoxide dismutase (SOD), N-terminal domain"/>
    <property type="match status" value="1"/>
</dbReference>
<sequence length="145" mass="15778">QFDQETMTLHHDKHHATYVANANAALEKHPEIGENLEELLANVESIPADIRQALINNGGGHLNHALFWELLSPEKTEVTKEVASAIDQAFGSFDAFKEQFAAAATGRFGSGWAWLVVTKEGSLEITSTANQDTPISEGKKPILAL</sequence>
<proteinExistence type="inferred from homology"/>
<evidence type="ECO:0000250" key="1">
    <source>
        <dbReference type="UniProtKB" id="P80293"/>
    </source>
</evidence>
<evidence type="ECO:0000305" key="2"/>
<organism>
    <name type="scientific">Streptococcus iniae</name>
    <name type="common">Streptococcus shiloi</name>
    <dbReference type="NCBI Taxonomy" id="1346"/>
    <lineage>
        <taxon>Bacteria</taxon>
        <taxon>Bacillati</taxon>
        <taxon>Bacillota</taxon>
        <taxon>Bacilli</taxon>
        <taxon>Lactobacillales</taxon>
        <taxon>Streptococcaceae</taxon>
        <taxon>Streptococcus</taxon>
    </lineage>
</organism>
<feature type="chain" id="PRO_0000160092" description="Superoxide dismutase [Mn/Fe]">
    <location>
        <begin position="1" status="less than"/>
        <end position="145" status="greater than"/>
    </location>
</feature>
<feature type="binding site" evidence="1">
    <location>
        <position position="10"/>
    </location>
    <ligand>
        <name>Fe(3+)</name>
        <dbReference type="ChEBI" id="CHEBI:29034"/>
    </ligand>
</feature>
<feature type="binding site" evidence="1">
    <location>
        <position position="10"/>
    </location>
    <ligand>
        <name>Mn(2+)</name>
        <dbReference type="ChEBI" id="CHEBI:29035"/>
    </ligand>
</feature>
<feature type="binding site" evidence="1">
    <location>
        <position position="64"/>
    </location>
    <ligand>
        <name>Fe(3+)</name>
        <dbReference type="ChEBI" id="CHEBI:29034"/>
    </ligand>
</feature>
<feature type="binding site" evidence="1">
    <location>
        <position position="64"/>
    </location>
    <ligand>
        <name>Mn(2+)</name>
        <dbReference type="ChEBI" id="CHEBI:29035"/>
    </ligand>
</feature>
<feature type="non-terminal residue">
    <location>
        <position position="1"/>
    </location>
</feature>
<feature type="non-terminal residue">
    <location>
        <position position="145"/>
    </location>
</feature>
<keyword id="KW-0408">Iron</keyword>
<keyword id="KW-0464">Manganese</keyword>
<keyword id="KW-0479">Metal-binding</keyword>
<keyword id="KW-0560">Oxidoreductase</keyword>
<comment type="function">
    <text evidence="1">Destroys superoxide anion radicals which are normally produced within the cells and which are toxic to biological systems. Catalyzes the dismutation of superoxide anion radicals into O2 and H2O2 by successive reduction and oxidation of the transition metal ion at the active site.</text>
</comment>
<comment type="catalytic activity">
    <reaction evidence="1">
        <text>2 superoxide + 2 H(+) = H2O2 + O2</text>
        <dbReference type="Rhea" id="RHEA:20696"/>
        <dbReference type="ChEBI" id="CHEBI:15378"/>
        <dbReference type="ChEBI" id="CHEBI:15379"/>
        <dbReference type="ChEBI" id="CHEBI:16240"/>
        <dbReference type="ChEBI" id="CHEBI:18421"/>
        <dbReference type="EC" id="1.15.1.1"/>
    </reaction>
    <physiologicalReaction direction="left-to-right" evidence="1">
        <dbReference type="Rhea" id="RHEA:20697"/>
    </physiologicalReaction>
</comment>
<comment type="cofactor">
    <cofactor evidence="1">
        <name>Mn(2+)</name>
        <dbReference type="ChEBI" id="CHEBI:29035"/>
    </cofactor>
    <cofactor evidence="1">
        <name>Fe(3+)</name>
        <dbReference type="ChEBI" id="CHEBI:29034"/>
    </cofactor>
    <text evidence="1">Binds 1 Mn(2+) or Fe(3+) ion per subunit.</text>
</comment>
<comment type="similarity">
    <text evidence="2">Belongs to the iron/manganese superoxide dismutase family.</text>
</comment>